<dbReference type="EMBL" id="CP000903">
    <property type="protein sequence ID" value="ABY46268.1"/>
    <property type="molecule type" value="Genomic_DNA"/>
</dbReference>
<dbReference type="RefSeq" id="WP_002016298.1">
    <property type="nucleotide sequence ID" value="NC_010184.1"/>
</dbReference>
<dbReference type="KEGG" id="bwe:BcerKBAB4_5122"/>
<dbReference type="eggNOG" id="COG1971">
    <property type="taxonomic scope" value="Bacteria"/>
</dbReference>
<dbReference type="HOGENOM" id="CLU_096410_1_0_9"/>
<dbReference type="Proteomes" id="UP000002154">
    <property type="component" value="Chromosome"/>
</dbReference>
<dbReference type="GO" id="GO:0005886">
    <property type="term" value="C:plasma membrane"/>
    <property type="evidence" value="ECO:0007669"/>
    <property type="project" value="UniProtKB-SubCell"/>
</dbReference>
<dbReference type="GO" id="GO:0005384">
    <property type="term" value="F:manganese ion transmembrane transporter activity"/>
    <property type="evidence" value="ECO:0007669"/>
    <property type="project" value="UniProtKB-UniRule"/>
</dbReference>
<dbReference type="HAMAP" id="MF_01521">
    <property type="entry name" value="MntP_pump"/>
    <property type="match status" value="1"/>
</dbReference>
<dbReference type="InterPro" id="IPR003810">
    <property type="entry name" value="Mntp/YtaF"/>
</dbReference>
<dbReference type="InterPro" id="IPR022929">
    <property type="entry name" value="Put_MntP"/>
</dbReference>
<dbReference type="PANTHER" id="PTHR35529">
    <property type="entry name" value="MANGANESE EFFLUX PUMP MNTP-RELATED"/>
    <property type="match status" value="1"/>
</dbReference>
<dbReference type="PANTHER" id="PTHR35529:SF1">
    <property type="entry name" value="MANGANESE EFFLUX PUMP MNTP-RELATED"/>
    <property type="match status" value="1"/>
</dbReference>
<dbReference type="Pfam" id="PF02659">
    <property type="entry name" value="Mntp"/>
    <property type="match status" value="1"/>
</dbReference>
<protein>
    <recommendedName>
        <fullName evidence="1">Putative manganese efflux pump MntP</fullName>
    </recommendedName>
</protein>
<proteinExistence type="inferred from homology"/>
<feature type="chain" id="PRO_1000200013" description="Putative manganese efflux pump MntP">
    <location>
        <begin position="1"/>
        <end position="182"/>
    </location>
</feature>
<feature type="transmembrane region" description="Helical" evidence="1">
    <location>
        <begin position="6"/>
        <end position="26"/>
    </location>
</feature>
<feature type="transmembrane region" description="Helical" evidence="1">
    <location>
        <begin position="37"/>
        <end position="57"/>
    </location>
</feature>
<feature type="transmembrane region" description="Helical" evidence="1">
    <location>
        <begin position="72"/>
        <end position="92"/>
    </location>
</feature>
<feature type="transmembrane region" description="Helical" evidence="1">
    <location>
        <begin position="101"/>
        <end position="121"/>
    </location>
</feature>
<feature type="transmembrane region" description="Helical" evidence="1">
    <location>
        <begin position="131"/>
        <end position="151"/>
    </location>
</feature>
<feature type="transmembrane region" description="Helical" evidence="1">
    <location>
        <begin position="162"/>
        <end position="182"/>
    </location>
</feature>
<keyword id="KW-1003">Cell membrane</keyword>
<keyword id="KW-0406">Ion transport</keyword>
<keyword id="KW-0464">Manganese</keyword>
<keyword id="KW-0472">Membrane</keyword>
<keyword id="KW-0812">Transmembrane</keyword>
<keyword id="KW-1133">Transmembrane helix</keyword>
<keyword id="KW-0813">Transport</keyword>
<name>MNTP_BACMK</name>
<sequence>MTLEQLIPLIIMAFALGMDAFSVSLGMGMVTLKLRQILYIGMTIGIFHIIMPFIGMVLGRFLSERYGDVANFAGAILLIGLGFYIVYSSILEGEETRTAPIGISLFVFAFGVSIDSFSVGLSLGIYGAETIITILLFGLISMLLAWMGLLLGSHAKNILGTYGEIVGGIILVGFGLYLLFPI</sequence>
<reference key="1">
    <citation type="journal article" date="2008" name="Chem. Biol. Interact.">
        <title>Extending the Bacillus cereus group genomics to putative food-borne pathogens of different toxicity.</title>
        <authorList>
            <person name="Lapidus A."/>
            <person name="Goltsman E."/>
            <person name="Auger S."/>
            <person name="Galleron N."/>
            <person name="Segurens B."/>
            <person name="Dossat C."/>
            <person name="Land M.L."/>
            <person name="Broussolle V."/>
            <person name="Brillard J."/>
            <person name="Guinebretiere M.-H."/>
            <person name="Sanchis V."/>
            <person name="Nguen-the C."/>
            <person name="Lereclus D."/>
            <person name="Richardson P."/>
            <person name="Wincker P."/>
            <person name="Weissenbach J."/>
            <person name="Ehrlich S.D."/>
            <person name="Sorokin A."/>
        </authorList>
    </citation>
    <scope>NUCLEOTIDE SEQUENCE [LARGE SCALE GENOMIC DNA]</scope>
    <source>
        <strain>KBAB4</strain>
    </source>
</reference>
<evidence type="ECO:0000255" key="1">
    <source>
        <dbReference type="HAMAP-Rule" id="MF_01521"/>
    </source>
</evidence>
<gene>
    <name evidence="1" type="primary">mntP</name>
    <name type="ordered locus">BcerKBAB4_5122</name>
</gene>
<comment type="function">
    <text evidence="1">Probably functions as a manganese efflux pump.</text>
</comment>
<comment type="subcellular location">
    <subcellularLocation>
        <location evidence="1">Cell membrane</location>
        <topology evidence="1">Multi-pass membrane protein</topology>
    </subcellularLocation>
</comment>
<comment type="similarity">
    <text evidence="1">Belongs to the MntP (TC 9.B.29) family.</text>
</comment>
<accession>A9VSC2</accession>
<organism>
    <name type="scientific">Bacillus mycoides (strain KBAB4)</name>
    <name type="common">Bacillus weihenstephanensis</name>
    <dbReference type="NCBI Taxonomy" id="315730"/>
    <lineage>
        <taxon>Bacteria</taxon>
        <taxon>Bacillati</taxon>
        <taxon>Bacillota</taxon>
        <taxon>Bacilli</taxon>
        <taxon>Bacillales</taxon>
        <taxon>Bacillaceae</taxon>
        <taxon>Bacillus</taxon>
        <taxon>Bacillus cereus group</taxon>
    </lineage>
</organism>